<gene>
    <name evidence="1" type="primary">mtnW</name>
    <name type="ordered locus">GTNG_0841</name>
</gene>
<comment type="function">
    <text evidence="1">Catalyzes the enolization of 2,3-diketo-5-methylthiopentyl-1-phosphate (DK-MTP-1-P) into 2-hydroxy-3-keto-5-methylthiopentenyl-1-phosphate (HK-MTPenyl-1-P).</text>
</comment>
<comment type="catalytic activity">
    <reaction evidence="1">
        <text>5-methylsulfanyl-2,3-dioxopentyl phosphate = 2-hydroxy-5-methylsulfanyl-3-oxopent-1-enyl phosphate</text>
        <dbReference type="Rhea" id="RHEA:18769"/>
        <dbReference type="ChEBI" id="CHEBI:58828"/>
        <dbReference type="ChEBI" id="CHEBI:59505"/>
        <dbReference type="EC" id="5.3.2.5"/>
    </reaction>
</comment>
<comment type="cofactor">
    <cofactor evidence="1">
        <name>Mg(2+)</name>
        <dbReference type="ChEBI" id="CHEBI:18420"/>
    </cofactor>
    <text evidence="1">Binds 1 Mg(2+) ion per subunit.</text>
</comment>
<comment type="pathway">
    <text evidence="1">Amino-acid biosynthesis; L-methionine biosynthesis via salvage pathway; L-methionine from S-methyl-5-thio-alpha-D-ribose 1-phosphate: step 3/6.</text>
</comment>
<comment type="subunit">
    <text evidence="1">Homodimer.</text>
</comment>
<comment type="miscellaneous">
    <text evidence="1">Has no RuBP-carboxylation activity.</text>
</comment>
<comment type="similarity">
    <text evidence="1">Belongs to the RuBisCO large chain family. Type IV subfamily.</text>
</comment>
<dbReference type="EC" id="5.3.2.5" evidence="1"/>
<dbReference type="EMBL" id="CP000557">
    <property type="protein sequence ID" value="ABO66219.1"/>
    <property type="molecule type" value="Genomic_DNA"/>
</dbReference>
<dbReference type="RefSeq" id="WP_011887036.1">
    <property type="nucleotide sequence ID" value="NC_009328.1"/>
</dbReference>
<dbReference type="SMR" id="A4ILL5"/>
<dbReference type="KEGG" id="gtn:GTNG_0841"/>
<dbReference type="eggNOG" id="COG1850">
    <property type="taxonomic scope" value="Bacteria"/>
</dbReference>
<dbReference type="HOGENOM" id="CLU_031450_3_1_9"/>
<dbReference type="UniPathway" id="UPA00904">
    <property type="reaction ID" value="UER00876"/>
</dbReference>
<dbReference type="Proteomes" id="UP000001578">
    <property type="component" value="Chromosome"/>
</dbReference>
<dbReference type="GO" id="GO:0043715">
    <property type="term" value="F:2,3-diketo-5-methylthiopentyl-1-phosphate enolase activity"/>
    <property type="evidence" value="ECO:0007669"/>
    <property type="project" value="UniProtKB-UniRule"/>
</dbReference>
<dbReference type="GO" id="GO:0000287">
    <property type="term" value="F:magnesium ion binding"/>
    <property type="evidence" value="ECO:0007669"/>
    <property type="project" value="UniProtKB-UniRule"/>
</dbReference>
<dbReference type="GO" id="GO:0016984">
    <property type="term" value="F:ribulose-bisphosphate carboxylase activity"/>
    <property type="evidence" value="ECO:0007669"/>
    <property type="project" value="InterPro"/>
</dbReference>
<dbReference type="GO" id="GO:0015977">
    <property type="term" value="P:carbon fixation"/>
    <property type="evidence" value="ECO:0007669"/>
    <property type="project" value="InterPro"/>
</dbReference>
<dbReference type="GO" id="GO:0019509">
    <property type="term" value="P:L-methionine salvage from methylthioadenosine"/>
    <property type="evidence" value="ECO:0007669"/>
    <property type="project" value="UniProtKB-UniRule"/>
</dbReference>
<dbReference type="CDD" id="cd08209">
    <property type="entry name" value="RLP_DK-MTP-1-P-enolase"/>
    <property type="match status" value="1"/>
</dbReference>
<dbReference type="Gene3D" id="3.20.20.110">
    <property type="entry name" value="Ribulose bisphosphate carboxylase, large subunit, C-terminal domain"/>
    <property type="match status" value="1"/>
</dbReference>
<dbReference type="Gene3D" id="3.30.70.150">
    <property type="entry name" value="RuBisCO large subunit, N-terminal domain"/>
    <property type="match status" value="1"/>
</dbReference>
<dbReference type="HAMAP" id="MF_01679">
    <property type="entry name" value="Salvage_MtnW"/>
    <property type="match status" value="1"/>
</dbReference>
<dbReference type="InterPro" id="IPR017717">
    <property type="entry name" value="Diketo-Methiopentyl-P_enolase"/>
</dbReference>
<dbReference type="InterPro" id="IPR033966">
    <property type="entry name" value="RuBisCO"/>
</dbReference>
<dbReference type="InterPro" id="IPR000685">
    <property type="entry name" value="RuBisCO_lsu_C"/>
</dbReference>
<dbReference type="InterPro" id="IPR036376">
    <property type="entry name" value="RuBisCO_lsu_C_sf"/>
</dbReference>
<dbReference type="InterPro" id="IPR017443">
    <property type="entry name" value="RuBisCO_lsu_fd_N"/>
</dbReference>
<dbReference type="InterPro" id="IPR036422">
    <property type="entry name" value="RuBisCO_lsu_N_sf"/>
</dbReference>
<dbReference type="NCBIfam" id="NF007095">
    <property type="entry name" value="PRK09549.1"/>
    <property type="match status" value="1"/>
</dbReference>
<dbReference type="NCBIfam" id="TIGR03332">
    <property type="entry name" value="salvage_mtnW"/>
    <property type="match status" value="1"/>
</dbReference>
<dbReference type="PANTHER" id="PTHR42704">
    <property type="entry name" value="RIBULOSE BISPHOSPHATE CARBOXYLASE"/>
    <property type="match status" value="1"/>
</dbReference>
<dbReference type="PANTHER" id="PTHR42704:SF17">
    <property type="entry name" value="RIBULOSE BISPHOSPHATE CARBOXYLASE LARGE CHAIN"/>
    <property type="match status" value="1"/>
</dbReference>
<dbReference type="Pfam" id="PF00016">
    <property type="entry name" value="RuBisCO_large"/>
    <property type="match status" value="1"/>
</dbReference>
<dbReference type="Pfam" id="PF02788">
    <property type="entry name" value="RuBisCO_large_N"/>
    <property type="match status" value="1"/>
</dbReference>
<dbReference type="SFLD" id="SFLDF00157">
    <property type="entry name" value="2_3-diketo-5-methylthiopentyl"/>
    <property type="match status" value="1"/>
</dbReference>
<dbReference type="SFLD" id="SFLDS00014">
    <property type="entry name" value="RuBisCO"/>
    <property type="match status" value="1"/>
</dbReference>
<dbReference type="SUPFAM" id="SSF51649">
    <property type="entry name" value="RuBisCo, C-terminal domain"/>
    <property type="match status" value="1"/>
</dbReference>
<dbReference type="SUPFAM" id="SSF54966">
    <property type="entry name" value="RuBisCO, large subunit, small (N-terminal) domain"/>
    <property type="match status" value="1"/>
</dbReference>
<reference key="1">
    <citation type="journal article" date="2007" name="Proc. Natl. Acad. Sci. U.S.A.">
        <title>Genome and proteome of long-chain alkane degrading Geobacillus thermodenitrificans NG80-2 isolated from a deep-subsurface oil reservoir.</title>
        <authorList>
            <person name="Feng L."/>
            <person name="Wang W."/>
            <person name="Cheng J."/>
            <person name="Ren Y."/>
            <person name="Zhao G."/>
            <person name="Gao C."/>
            <person name="Tang Y."/>
            <person name="Liu X."/>
            <person name="Han W."/>
            <person name="Peng X."/>
            <person name="Liu R."/>
            <person name="Wang L."/>
        </authorList>
    </citation>
    <scope>NUCLEOTIDE SEQUENCE [LARGE SCALE GENOMIC DNA]</scope>
    <source>
        <strain>NG80-2</strain>
    </source>
</reference>
<evidence type="ECO:0000255" key="1">
    <source>
        <dbReference type="HAMAP-Rule" id="MF_01679"/>
    </source>
</evidence>
<protein>
    <recommendedName>
        <fullName evidence="1">2,3-diketo-5-methylthiopentyl-1-phosphate enolase</fullName>
        <shortName evidence="1">DK-MTP-1-P enolase</shortName>
        <ecNumber evidence="1">5.3.2.5</ecNumber>
    </recommendedName>
    <alternativeName>
        <fullName evidence="1">RuBisCO-like protein</fullName>
        <shortName evidence="1">RLP</shortName>
    </alternativeName>
</protein>
<feature type="chain" id="PRO_0000357290" description="2,3-diketo-5-methylthiopentyl-1-phosphate enolase">
    <location>
        <begin position="1"/>
        <end position="413"/>
    </location>
</feature>
<feature type="active site" description="Proton acceptor" evidence="1">
    <location>
        <position position="98"/>
    </location>
</feature>
<feature type="binding site" evidence="1">
    <location>
        <position position="147"/>
    </location>
    <ligand>
        <name>substrate</name>
    </ligand>
</feature>
<feature type="binding site" evidence="1">
    <location>
        <begin position="173"/>
        <end position="176"/>
    </location>
    <ligand>
        <name>substrate</name>
    </ligand>
</feature>
<feature type="binding site" description="via carbamate group" evidence="1">
    <location>
        <position position="173"/>
    </location>
    <ligand>
        <name>Mg(2+)</name>
        <dbReference type="ChEBI" id="CHEBI:18420"/>
    </ligand>
</feature>
<feature type="binding site" evidence="1">
    <location>
        <position position="175"/>
    </location>
    <ligand>
        <name>Mg(2+)</name>
        <dbReference type="ChEBI" id="CHEBI:18420"/>
    </ligand>
</feature>
<feature type="binding site" evidence="1">
    <location>
        <position position="176"/>
    </location>
    <ligand>
        <name>Mg(2+)</name>
        <dbReference type="ChEBI" id="CHEBI:18420"/>
    </ligand>
</feature>
<feature type="binding site" evidence="1">
    <location>
        <position position="264"/>
    </location>
    <ligand>
        <name>substrate</name>
    </ligand>
</feature>
<feature type="binding site" evidence="1">
    <location>
        <position position="337"/>
    </location>
    <ligand>
        <name>substrate</name>
    </ligand>
</feature>
<feature type="binding site" evidence="1">
    <location>
        <begin position="359"/>
        <end position="360"/>
    </location>
    <ligand>
        <name>substrate</name>
    </ligand>
</feature>
<feature type="modified residue" description="N6-carboxylysine" evidence="1">
    <location>
        <position position="173"/>
    </location>
</feature>
<organism>
    <name type="scientific">Geobacillus thermodenitrificans (strain NG80-2)</name>
    <dbReference type="NCBI Taxonomy" id="420246"/>
    <lineage>
        <taxon>Bacteria</taxon>
        <taxon>Bacillati</taxon>
        <taxon>Bacillota</taxon>
        <taxon>Bacilli</taxon>
        <taxon>Bacillales</taxon>
        <taxon>Anoxybacillaceae</taxon>
        <taxon>Geobacillus</taxon>
    </lineage>
</organism>
<name>MTNW_GEOTN</name>
<keyword id="KW-0028">Amino-acid biosynthesis</keyword>
<keyword id="KW-0413">Isomerase</keyword>
<keyword id="KW-0460">Magnesium</keyword>
<keyword id="KW-0479">Metal-binding</keyword>
<keyword id="KW-0486">Methionine biosynthesis</keyword>
<proteinExistence type="inferred from homology"/>
<sequence length="413" mass="44931">MSTVIATYLLHDEKDIRKKAEGIALGLTVGTWTDLPALEQEQLRKHKGEVVGIEELGESGPANEYFDKRLKRAIVKIAYPTVNFSADLPALLATTFGKLSLDGEVRLLDLELSDEWKRHFPGPRFGIAGIREKVGVYDRPLLMSIFKGIIGRDLAYLTSELKKQALGGVDLVKDDEILFDNELLPFEKRITAGKAALQEVYEQTGKRTLYAVNLTGKTFELKEKAKRAAELGADVLLFNVFTYGLDVLQGLREDENINVPIMAHPAFSGAMTPSEFYGVAPSLLLGKFLRLAGADFVLFPSPYGSVALEREQALGIARALTDEQEPFARAFPVPSAGIHPGLVPLLVRDFGLDCIVNAGGGIHGHPDGAIGGGQAFRAAIDAALAGRLLREAVKENEALQKAIDRWGAIEVEA</sequence>
<accession>A4ILL5</accession>